<feature type="chain" id="PRO_0000202150" description="Peroxisomal succinyl-coenzyme A thioesterase">
    <location>
        <begin position="1"/>
        <end position="421"/>
    </location>
</feature>
<feature type="short sequence motif" description="Microbody targeting signal" evidence="2">
    <location>
        <begin position="419"/>
        <end position="421"/>
    </location>
</feature>
<feature type="active site" description="Charge relay system" evidence="1">
    <location>
        <position position="232"/>
    </location>
</feature>
<feature type="active site" description="Charge relay system" evidence="1">
    <location>
        <position position="326"/>
    </location>
</feature>
<feature type="active site" description="Charge relay system" evidence="1">
    <location>
        <position position="360"/>
    </location>
</feature>
<feature type="modified residue" description="N6-succinyllysine" evidence="9">
    <location>
        <position position="313"/>
    </location>
</feature>
<feature type="sequence conflict" description="In Ref. 2; BAC32814." evidence="6" ref="2">
    <original>D</original>
    <variation>N</variation>
    <location>
        <position position="87"/>
    </location>
</feature>
<feature type="sequence conflict" description="In Ref. 1; AAF13872." evidence="6" ref="1">
    <original>R</original>
    <variation>G</variation>
    <location>
        <position position="136"/>
    </location>
</feature>
<feature type="sequence conflict" description="In Ref. 2; BAC38060." evidence="6" ref="2">
    <original>M</original>
    <variation>K</variation>
    <location>
        <position position="215"/>
    </location>
</feature>
<reference key="1">
    <citation type="journal article" date="1999" name="J. Biol. Chem.">
        <title>Peroxisome proliferator-induced long chain acyl-CoA thioesterases comprise a highly conserved novel multi-gene family involved in lipid metabolism.</title>
        <authorList>
            <person name="Hunt M.C."/>
            <person name="Nousiainen S.E.B."/>
            <person name="Huttunen M.K."/>
            <person name="Orii K.E."/>
            <person name="Svensson L.T."/>
            <person name="Alexson S.E.H."/>
        </authorList>
    </citation>
    <scope>NUCLEOTIDE SEQUENCE [GENOMIC DNA]</scope>
    <scope>TISSUE SPECIFICITY</scope>
    <scope>INDUCTION</scope>
    <source>
        <strain>C57BL/6J</strain>
    </source>
</reference>
<reference key="2">
    <citation type="journal article" date="2005" name="Science">
        <title>The transcriptional landscape of the mammalian genome.</title>
        <authorList>
            <person name="Carninci P."/>
            <person name="Kasukawa T."/>
            <person name="Katayama S."/>
            <person name="Gough J."/>
            <person name="Frith M.C."/>
            <person name="Maeda N."/>
            <person name="Oyama R."/>
            <person name="Ravasi T."/>
            <person name="Lenhard B."/>
            <person name="Wells C."/>
            <person name="Kodzius R."/>
            <person name="Shimokawa K."/>
            <person name="Bajic V.B."/>
            <person name="Brenner S.E."/>
            <person name="Batalov S."/>
            <person name="Forrest A.R."/>
            <person name="Zavolan M."/>
            <person name="Davis M.J."/>
            <person name="Wilming L.G."/>
            <person name="Aidinis V."/>
            <person name="Allen J.E."/>
            <person name="Ambesi-Impiombato A."/>
            <person name="Apweiler R."/>
            <person name="Aturaliya R.N."/>
            <person name="Bailey T.L."/>
            <person name="Bansal M."/>
            <person name="Baxter L."/>
            <person name="Beisel K.W."/>
            <person name="Bersano T."/>
            <person name="Bono H."/>
            <person name="Chalk A.M."/>
            <person name="Chiu K.P."/>
            <person name="Choudhary V."/>
            <person name="Christoffels A."/>
            <person name="Clutterbuck D.R."/>
            <person name="Crowe M.L."/>
            <person name="Dalla E."/>
            <person name="Dalrymple B.P."/>
            <person name="de Bono B."/>
            <person name="Della Gatta G."/>
            <person name="di Bernardo D."/>
            <person name="Down T."/>
            <person name="Engstrom P."/>
            <person name="Fagiolini M."/>
            <person name="Faulkner G."/>
            <person name="Fletcher C.F."/>
            <person name="Fukushima T."/>
            <person name="Furuno M."/>
            <person name="Futaki S."/>
            <person name="Gariboldi M."/>
            <person name="Georgii-Hemming P."/>
            <person name="Gingeras T.R."/>
            <person name="Gojobori T."/>
            <person name="Green R.E."/>
            <person name="Gustincich S."/>
            <person name="Harbers M."/>
            <person name="Hayashi Y."/>
            <person name="Hensch T.K."/>
            <person name="Hirokawa N."/>
            <person name="Hill D."/>
            <person name="Huminiecki L."/>
            <person name="Iacono M."/>
            <person name="Ikeo K."/>
            <person name="Iwama A."/>
            <person name="Ishikawa T."/>
            <person name="Jakt M."/>
            <person name="Kanapin A."/>
            <person name="Katoh M."/>
            <person name="Kawasawa Y."/>
            <person name="Kelso J."/>
            <person name="Kitamura H."/>
            <person name="Kitano H."/>
            <person name="Kollias G."/>
            <person name="Krishnan S.P."/>
            <person name="Kruger A."/>
            <person name="Kummerfeld S.K."/>
            <person name="Kurochkin I.V."/>
            <person name="Lareau L.F."/>
            <person name="Lazarevic D."/>
            <person name="Lipovich L."/>
            <person name="Liu J."/>
            <person name="Liuni S."/>
            <person name="McWilliam S."/>
            <person name="Madan Babu M."/>
            <person name="Madera M."/>
            <person name="Marchionni L."/>
            <person name="Matsuda H."/>
            <person name="Matsuzawa S."/>
            <person name="Miki H."/>
            <person name="Mignone F."/>
            <person name="Miyake S."/>
            <person name="Morris K."/>
            <person name="Mottagui-Tabar S."/>
            <person name="Mulder N."/>
            <person name="Nakano N."/>
            <person name="Nakauchi H."/>
            <person name="Ng P."/>
            <person name="Nilsson R."/>
            <person name="Nishiguchi S."/>
            <person name="Nishikawa S."/>
            <person name="Nori F."/>
            <person name="Ohara O."/>
            <person name="Okazaki Y."/>
            <person name="Orlando V."/>
            <person name="Pang K.C."/>
            <person name="Pavan W.J."/>
            <person name="Pavesi G."/>
            <person name="Pesole G."/>
            <person name="Petrovsky N."/>
            <person name="Piazza S."/>
            <person name="Reed J."/>
            <person name="Reid J.F."/>
            <person name="Ring B.Z."/>
            <person name="Ringwald M."/>
            <person name="Rost B."/>
            <person name="Ruan Y."/>
            <person name="Salzberg S.L."/>
            <person name="Sandelin A."/>
            <person name="Schneider C."/>
            <person name="Schoenbach C."/>
            <person name="Sekiguchi K."/>
            <person name="Semple C.A."/>
            <person name="Seno S."/>
            <person name="Sessa L."/>
            <person name="Sheng Y."/>
            <person name="Shibata Y."/>
            <person name="Shimada H."/>
            <person name="Shimada K."/>
            <person name="Silva D."/>
            <person name="Sinclair B."/>
            <person name="Sperling S."/>
            <person name="Stupka E."/>
            <person name="Sugiura K."/>
            <person name="Sultana R."/>
            <person name="Takenaka Y."/>
            <person name="Taki K."/>
            <person name="Tammoja K."/>
            <person name="Tan S.L."/>
            <person name="Tang S."/>
            <person name="Taylor M.S."/>
            <person name="Tegner J."/>
            <person name="Teichmann S.A."/>
            <person name="Ueda H.R."/>
            <person name="van Nimwegen E."/>
            <person name="Verardo R."/>
            <person name="Wei C.L."/>
            <person name="Yagi K."/>
            <person name="Yamanishi H."/>
            <person name="Zabarovsky E."/>
            <person name="Zhu S."/>
            <person name="Zimmer A."/>
            <person name="Hide W."/>
            <person name="Bult C."/>
            <person name="Grimmond S.M."/>
            <person name="Teasdale R.D."/>
            <person name="Liu E.T."/>
            <person name="Brusic V."/>
            <person name="Quackenbush J."/>
            <person name="Wahlestedt C."/>
            <person name="Mattick J.S."/>
            <person name="Hume D.A."/>
            <person name="Kai C."/>
            <person name="Sasaki D."/>
            <person name="Tomaru Y."/>
            <person name="Fukuda S."/>
            <person name="Kanamori-Katayama M."/>
            <person name="Suzuki M."/>
            <person name="Aoki J."/>
            <person name="Arakawa T."/>
            <person name="Iida J."/>
            <person name="Imamura K."/>
            <person name="Itoh M."/>
            <person name="Kato T."/>
            <person name="Kawaji H."/>
            <person name="Kawagashira N."/>
            <person name="Kawashima T."/>
            <person name="Kojima M."/>
            <person name="Kondo S."/>
            <person name="Konno H."/>
            <person name="Nakano K."/>
            <person name="Ninomiya N."/>
            <person name="Nishio T."/>
            <person name="Okada M."/>
            <person name="Plessy C."/>
            <person name="Shibata K."/>
            <person name="Shiraki T."/>
            <person name="Suzuki S."/>
            <person name="Tagami M."/>
            <person name="Waki K."/>
            <person name="Watahiki A."/>
            <person name="Okamura-Oho Y."/>
            <person name="Suzuki H."/>
            <person name="Kawai J."/>
            <person name="Hayashizaki Y."/>
        </authorList>
    </citation>
    <scope>NUCLEOTIDE SEQUENCE [LARGE SCALE MRNA]</scope>
    <source>
        <strain>C57BL/6J</strain>
        <tissue>Adipose tissue</tissue>
        <tissue>Liver</tissue>
    </source>
</reference>
<reference key="3">
    <citation type="journal article" date="2005" name="J. Biol. Chem.">
        <title>The identification of a succinyl-CoA thioesterase suggests a novel pathway for succinate production in peroxisomes.</title>
        <authorList>
            <person name="Westin M.A."/>
            <person name="Hunt M.C."/>
            <person name="Alexson S.E."/>
        </authorList>
    </citation>
    <scope>FUNCTION</scope>
    <scope>CATALYTIC ACTIVITY</scope>
    <scope>BIOPHYSICOCHEMICAL PROPERTIES</scope>
    <scope>PATHWAY</scope>
    <scope>SUBCELLULAR LOCATION</scope>
    <scope>TISSUE SPECIFICITY</scope>
</reference>
<reference key="4">
    <citation type="journal article" date="2006" name="FASEB J.">
        <title>Analysis of the mouse and human acyl-CoA thioesterase (ACOT) gene clusters shows that convergent, functional evolution results in a reduced number of human peroxisomal ACOTs.</title>
        <authorList>
            <person name="Hunt M.C."/>
            <person name="Rautanen A."/>
            <person name="Westin M.A.K."/>
            <person name="Svensson L.T."/>
            <person name="Alexson S.E.H."/>
        </authorList>
    </citation>
    <scope>FUNCTION</scope>
    <scope>CATALYTIC ACTIVITY</scope>
    <scope>PATHWAY</scope>
    <scope>TISSUE SPECIFICITY</scope>
</reference>
<reference key="5">
    <citation type="journal article" date="2010" name="Cell">
        <title>A tissue-specific atlas of mouse protein phosphorylation and expression.</title>
        <authorList>
            <person name="Huttlin E.L."/>
            <person name="Jedrychowski M.P."/>
            <person name="Elias J.E."/>
            <person name="Goswami T."/>
            <person name="Rad R."/>
            <person name="Beausoleil S.A."/>
            <person name="Villen J."/>
            <person name="Haas W."/>
            <person name="Sowa M.E."/>
            <person name="Gygi S.P."/>
        </authorList>
    </citation>
    <scope>IDENTIFICATION BY MASS SPECTROMETRY [LARGE SCALE ANALYSIS]</scope>
    <source>
        <tissue>Kidney</tissue>
        <tissue>Liver</tissue>
    </source>
</reference>
<reference key="6">
    <citation type="journal article" date="2013" name="Mol. Cell">
        <title>SIRT5-mediated lysine desuccinylation impacts diverse metabolic pathways.</title>
        <authorList>
            <person name="Park J."/>
            <person name="Chen Y."/>
            <person name="Tishkoff D.X."/>
            <person name="Peng C."/>
            <person name="Tan M."/>
            <person name="Dai L."/>
            <person name="Xie Z."/>
            <person name="Zhang Y."/>
            <person name="Zwaans B.M."/>
            <person name="Skinner M.E."/>
            <person name="Lombard D.B."/>
            <person name="Zhao Y."/>
        </authorList>
    </citation>
    <scope>SUCCINYLATION [LARGE SCALE ANALYSIS] AT LYS-313</scope>
    <scope>IDENTIFICATION BY MASS SPECTROMETRY [LARGE SCALE ANALYSIS]</scope>
    <source>
        <tissue>Liver</tissue>
    </source>
</reference>
<evidence type="ECO:0000250" key="1">
    <source>
        <dbReference type="UniProtKB" id="P49753"/>
    </source>
</evidence>
<evidence type="ECO:0000255" key="2"/>
<evidence type="ECO:0000269" key="3">
    <source>
    </source>
</evidence>
<evidence type="ECO:0000269" key="4">
    <source>
    </source>
</evidence>
<evidence type="ECO:0000269" key="5">
    <source>
    </source>
</evidence>
<evidence type="ECO:0000305" key="6"/>
<evidence type="ECO:0000305" key="7">
    <source>
    </source>
</evidence>
<evidence type="ECO:0000305" key="8">
    <source>
    </source>
</evidence>
<evidence type="ECO:0007744" key="9">
    <source>
    </source>
</evidence>
<sequence>MAATLSVEPTGRSCWDEPLSIAVRGLAPEQPVTLRSVLRDEKGALFRAHARYRADSHGELDLARVPALGGSFSGLEPMGLLWAMEPDRPFWRLIKRDVQTPFLVELEVLDGHEPDGGRRLARTVHERHFMAPGVRRVPVREGRVRATLFLPPGQGPFPGIIDVYGVGGGLLEYRAGLVAGHGFATLALAFYDFEDLPKELNVIEVDYFEEAVRYMLRHPKVKGPDIGLLGLSLGADVCLIMASFLNNVSATVSINGSAFSGNRHIKYKQTMIPPLGHDLRRMKVAFSGILDIVDIRNDAVGGCENPSMIPIEKAKGPILFVAGQDDHCWRSELYTQIASDRLQAHGKERPQVLSYPGTGHYIEPPYFPMCPASLHKIVNEAVIWGGEVKAHSKAQIDAWKQILFFFGKHLGSTHSRASCRL</sequence>
<name>ACOT4_MOUSE</name>
<keyword id="KW-0276">Fatty acid metabolism</keyword>
<keyword id="KW-0378">Hydrolase</keyword>
<keyword id="KW-0443">Lipid metabolism</keyword>
<keyword id="KW-0576">Peroxisome</keyword>
<keyword id="KW-1185">Reference proteome</keyword>
<keyword id="KW-0719">Serine esterase</keyword>
<organism>
    <name type="scientific">Mus musculus</name>
    <name type="common">Mouse</name>
    <dbReference type="NCBI Taxonomy" id="10090"/>
    <lineage>
        <taxon>Eukaryota</taxon>
        <taxon>Metazoa</taxon>
        <taxon>Chordata</taxon>
        <taxon>Craniata</taxon>
        <taxon>Vertebrata</taxon>
        <taxon>Euteleostomi</taxon>
        <taxon>Mammalia</taxon>
        <taxon>Eutheria</taxon>
        <taxon>Euarchontoglires</taxon>
        <taxon>Glires</taxon>
        <taxon>Rodentia</taxon>
        <taxon>Myomorpha</taxon>
        <taxon>Muroidea</taxon>
        <taxon>Muridae</taxon>
        <taxon>Murinae</taxon>
        <taxon>Mus</taxon>
        <taxon>Mus</taxon>
    </lineage>
</organism>
<protein>
    <recommendedName>
        <fullName evidence="8">Peroxisomal succinyl-coenzyme A thioesterase</fullName>
        <ecNumber evidence="4 5">3.1.2.3</ecNumber>
    </recommendedName>
    <alternativeName>
        <fullName>Acyl-coenzyme A thioesterase 4</fullName>
        <shortName>Acyl-CoA thioesterase 4</shortName>
    </alternativeName>
    <alternativeName>
        <fullName>PTE-2b</fullName>
    </alternativeName>
    <alternativeName>
        <fullName>Peroxisomal acyl coenzyme A thioester hydrolase Ib</fullName>
    </alternativeName>
    <alternativeName>
        <fullName>Peroxisomal long-chain acyl-CoA thioesterase Ib</fullName>
        <shortName>PTE-Ib</shortName>
    </alternativeName>
</protein>
<accession>Q8BWN8</accession>
<accession>Q8BJQ1</accession>
<accession>Q8BL20</accession>
<accession>Q9QYR8</accession>
<comment type="function">
    <text evidence="4 5">Catalyzes the hydrolysis of acyl-CoAs into free fatty acids and coenzyme A (CoASH), regulating their respective intracellular levels (PubMed:16141203, PubMed:16940157). In contrast to its human ortholog, functions essentially as a succinyl-CoA thioesterase with no activity with medium to long chain saturated acyl-CoAs and with a low activity toward glutaryl-CoA (PubMed:16141203, PubMed:16940157).</text>
</comment>
<comment type="catalytic activity">
    <reaction evidence="4 5">
        <text>succinyl-CoA + H2O = succinate + CoA + H(+)</text>
        <dbReference type="Rhea" id="RHEA:11516"/>
        <dbReference type="ChEBI" id="CHEBI:15377"/>
        <dbReference type="ChEBI" id="CHEBI:15378"/>
        <dbReference type="ChEBI" id="CHEBI:30031"/>
        <dbReference type="ChEBI" id="CHEBI:57287"/>
        <dbReference type="ChEBI" id="CHEBI:57292"/>
        <dbReference type="EC" id="3.1.2.3"/>
    </reaction>
    <physiologicalReaction direction="left-to-right" evidence="7 8">
        <dbReference type="Rhea" id="RHEA:11517"/>
    </physiologicalReaction>
</comment>
<comment type="catalytic activity">
    <reaction evidence="4 5">
        <text>glutaryl-CoA + H2O = glutarate + CoA + H(+)</text>
        <dbReference type="Rhea" id="RHEA:40575"/>
        <dbReference type="ChEBI" id="CHEBI:15377"/>
        <dbReference type="ChEBI" id="CHEBI:15378"/>
        <dbReference type="ChEBI" id="CHEBI:30921"/>
        <dbReference type="ChEBI" id="CHEBI:57287"/>
        <dbReference type="ChEBI" id="CHEBI:57378"/>
    </reaction>
    <physiologicalReaction direction="left-to-right" evidence="7 8">
        <dbReference type="Rhea" id="RHEA:40576"/>
    </physiologicalReaction>
</comment>
<comment type="biophysicochemical properties">
    <kinetics>
        <KM evidence="4">13.3 uM for succinyl-CoA</KM>
        <KM evidence="4">37.1 uM for glutaryl-CoA</KM>
        <Vmax evidence="4">3.98 umol/min/mg enzyme with succinyl-CoA as substrate</Vmax>
        <Vmax evidence="4">1.14 umol/min/mg enzyme with glutaryl-CoA as substrate</Vmax>
    </kinetics>
</comment>
<comment type="pathway">
    <text evidence="7 8">Lipid metabolism; fatty acid metabolism.</text>
</comment>
<comment type="subcellular location">
    <subcellularLocation>
        <location evidence="4">Peroxisome</location>
    </subcellularLocation>
</comment>
<comment type="tissue specificity">
    <text evidence="3 4 5">Mainly expressed in liver and kidney. Weakly expressed in other tissues including intestine, adrenal gland and adipose tissues.</text>
</comment>
<comment type="induction">
    <text evidence="3">In the liver, by peroxisome proliferator (Clofibrate) treatment, via the peroxisome proliferator-activated receptors (PPARs) or fasting for 24 hours.</text>
</comment>
<comment type="similarity">
    <text evidence="6">Belongs to the C/M/P thioester hydrolase family.</text>
</comment>
<gene>
    <name type="primary">Acot4</name>
    <name type="synonym">Pte1b</name>
    <name type="synonym">Pte2b</name>
</gene>
<dbReference type="EC" id="3.1.2.3" evidence="4 5"/>
<dbReference type="EMBL" id="AF180801">
    <property type="protein sequence ID" value="AAF13872.1"/>
    <property type="molecule type" value="Genomic_DNA"/>
</dbReference>
<dbReference type="EMBL" id="AF180799">
    <property type="protein sequence ID" value="AAF13872.1"/>
    <property type="status" value="JOINED"/>
    <property type="molecule type" value="Genomic_DNA"/>
</dbReference>
<dbReference type="EMBL" id="AF180800">
    <property type="protein sequence ID" value="AAF13872.1"/>
    <property type="status" value="JOINED"/>
    <property type="molecule type" value="Genomic_DNA"/>
</dbReference>
<dbReference type="EMBL" id="AK046630">
    <property type="protein sequence ID" value="BAC32814.1"/>
    <property type="molecule type" value="mRNA"/>
</dbReference>
<dbReference type="EMBL" id="AK050420">
    <property type="protein sequence ID" value="BAC34246.1"/>
    <property type="molecule type" value="mRNA"/>
</dbReference>
<dbReference type="EMBL" id="AK080883">
    <property type="protein sequence ID" value="BAC38060.1"/>
    <property type="molecule type" value="mRNA"/>
</dbReference>
<dbReference type="CCDS" id="CCDS26035.1"/>
<dbReference type="RefSeq" id="NP_599008.3">
    <property type="nucleotide sequence ID" value="NM_134247.3"/>
</dbReference>
<dbReference type="SMR" id="Q8BWN8"/>
<dbReference type="BioGRID" id="228585">
    <property type="interactions" value="1"/>
</dbReference>
<dbReference type="FunCoup" id="Q8BWN8">
    <property type="interactions" value="80"/>
</dbReference>
<dbReference type="STRING" id="10090.ENSMUSP00000021652"/>
<dbReference type="SwissLipids" id="SLP:000000593"/>
<dbReference type="ESTHER" id="mouse-acot4">
    <property type="family name" value="Acyl-CoA_Thioesterase"/>
</dbReference>
<dbReference type="MEROPS" id="S09.A60"/>
<dbReference type="GlyGen" id="Q8BWN8">
    <property type="glycosylation" value="1 site, 1 O-linked glycan (1 site)"/>
</dbReference>
<dbReference type="iPTMnet" id="Q8BWN8"/>
<dbReference type="PhosphoSitePlus" id="Q8BWN8"/>
<dbReference type="SwissPalm" id="Q8BWN8"/>
<dbReference type="jPOST" id="Q8BWN8"/>
<dbReference type="PaxDb" id="10090-ENSMUSP00000021652"/>
<dbReference type="ProteomicsDB" id="285843"/>
<dbReference type="Pumba" id="Q8BWN8"/>
<dbReference type="Antibodypedia" id="33">
    <property type="antibodies" value="85 antibodies from 22 providers"/>
</dbReference>
<dbReference type="DNASU" id="171282"/>
<dbReference type="Ensembl" id="ENSMUST00000021652.5">
    <property type="protein sequence ID" value="ENSMUSP00000021652.4"/>
    <property type="gene ID" value="ENSMUSG00000052392.6"/>
</dbReference>
<dbReference type="GeneID" id="171282"/>
<dbReference type="KEGG" id="mmu:171282"/>
<dbReference type="UCSC" id="uc007oed.1">
    <property type="organism name" value="mouse"/>
</dbReference>
<dbReference type="AGR" id="MGI:2159621"/>
<dbReference type="CTD" id="122970"/>
<dbReference type="MGI" id="MGI:2159621">
    <property type="gene designation" value="Acot4"/>
</dbReference>
<dbReference type="VEuPathDB" id="HostDB:ENSMUSG00000052392"/>
<dbReference type="eggNOG" id="ENOG502QQ8Z">
    <property type="taxonomic scope" value="Eukaryota"/>
</dbReference>
<dbReference type="GeneTree" id="ENSGT01010000222336"/>
<dbReference type="HOGENOM" id="CLU_029849_4_0_1"/>
<dbReference type="InParanoid" id="Q8BWN8"/>
<dbReference type="OMA" id="VDAWEQI"/>
<dbReference type="OrthoDB" id="6347013at2759"/>
<dbReference type="PhylomeDB" id="Q8BWN8"/>
<dbReference type="TreeFam" id="TF314911"/>
<dbReference type="Reactome" id="R-MMU-390247">
    <property type="pathway name" value="Beta-oxidation of very long chain fatty acids"/>
</dbReference>
<dbReference type="Reactome" id="R-MMU-9033241">
    <property type="pathway name" value="Peroxisomal protein import"/>
</dbReference>
<dbReference type="UniPathway" id="UPA00199"/>
<dbReference type="BioGRID-ORCS" id="171282">
    <property type="hits" value="2 hits in 81 CRISPR screens"/>
</dbReference>
<dbReference type="ChiTaRS" id="Acot4">
    <property type="organism name" value="mouse"/>
</dbReference>
<dbReference type="PRO" id="PR:Q8BWN8"/>
<dbReference type="Proteomes" id="UP000000589">
    <property type="component" value="Chromosome 12"/>
</dbReference>
<dbReference type="RNAct" id="Q8BWN8">
    <property type="molecule type" value="protein"/>
</dbReference>
<dbReference type="Bgee" id="ENSMUSG00000052392">
    <property type="expression patterns" value="Expressed in right kidney and 57 other cell types or tissues"/>
</dbReference>
<dbReference type="ExpressionAtlas" id="Q8BWN8">
    <property type="expression patterns" value="baseline and differential"/>
</dbReference>
<dbReference type="GO" id="GO:0005777">
    <property type="term" value="C:peroxisome"/>
    <property type="evidence" value="ECO:0000314"/>
    <property type="project" value="HGNC-UCL"/>
</dbReference>
<dbReference type="GO" id="GO:0052689">
    <property type="term" value="F:carboxylic ester hydrolase activity"/>
    <property type="evidence" value="ECO:0007669"/>
    <property type="project" value="UniProtKB-KW"/>
</dbReference>
<dbReference type="GO" id="GO:0047617">
    <property type="term" value="F:fatty acyl-CoA hydrolase activity"/>
    <property type="evidence" value="ECO:0000314"/>
    <property type="project" value="HGNC-UCL"/>
</dbReference>
<dbReference type="GO" id="GO:0004778">
    <property type="term" value="F:succinyl-CoA hydrolase activity"/>
    <property type="evidence" value="ECO:0007669"/>
    <property type="project" value="UniProtKB-EC"/>
</dbReference>
<dbReference type="GO" id="GO:0006637">
    <property type="term" value="P:acyl-CoA metabolic process"/>
    <property type="evidence" value="ECO:0000314"/>
    <property type="project" value="HGNC-UCL"/>
</dbReference>
<dbReference type="GO" id="GO:0043649">
    <property type="term" value="P:dicarboxylic acid catabolic process"/>
    <property type="evidence" value="ECO:0007669"/>
    <property type="project" value="Ensembl"/>
</dbReference>
<dbReference type="GO" id="GO:0043648">
    <property type="term" value="P:dicarboxylic acid metabolic process"/>
    <property type="evidence" value="ECO:0000314"/>
    <property type="project" value="HGNC-UCL"/>
</dbReference>
<dbReference type="GO" id="GO:0001676">
    <property type="term" value="P:long-chain fatty acid metabolic process"/>
    <property type="evidence" value="ECO:0007669"/>
    <property type="project" value="Ensembl"/>
</dbReference>
<dbReference type="GO" id="GO:0032788">
    <property type="term" value="P:saturated monocarboxylic acid metabolic process"/>
    <property type="evidence" value="ECO:0007669"/>
    <property type="project" value="Ensembl"/>
</dbReference>
<dbReference type="GO" id="GO:0046459">
    <property type="term" value="P:short-chain fatty acid metabolic process"/>
    <property type="evidence" value="ECO:0000314"/>
    <property type="project" value="HGNC-UCL"/>
</dbReference>
<dbReference type="GO" id="GO:0006104">
    <property type="term" value="P:succinyl-CoA metabolic process"/>
    <property type="evidence" value="ECO:0000314"/>
    <property type="project" value="HGNC-UCL"/>
</dbReference>
<dbReference type="GO" id="GO:0032789">
    <property type="term" value="P:unsaturated monocarboxylic acid metabolic process"/>
    <property type="evidence" value="ECO:0007669"/>
    <property type="project" value="Ensembl"/>
</dbReference>
<dbReference type="GO" id="GO:0000038">
    <property type="term" value="P:very long-chain fatty acid metabolic process"/>
    <property type="evidence" value="ECO:0007669"/>
    <property type="project" value="Ensembl"/>
</dbReference>
<dbReference type="FunFam" id="2.60.40.2240:FF:000001">
    <property type="entry name" value="acyl-coenzyme A thioesterase 4"/>
    <property type="match status" value="1"/>
</dbReference>
<dbReference type="FunFam" id="3.40.50.1820:FF:000024">
    <property type="entry name" value="acyl-coenzyme A thioesterase 4"/>
    <property type="match status" value="1"/>
</dbReference>
<dbReference type="Gene3D" id="2.60.40.2240">
    <property type="entry name" value="Acyl-CoA thioester hydrolase/BAAT N-terminal domain"/>
    <property type="match status" value="1"/>
</dbReference>
<dbReference type="Gene3D" id="3.40.50.1820">
    <property type="entry name" value="alpha/beta hydrolase"/>
    <property type="match status" value="1"/>
</dbReference>
<dbReference type="InterPro" id="IPR029058">
    <property type="entry name" value="AB_hydrolase_fold"/>
</dbReference>
<dbReference type="InterPro" id="IPR016662">
    <property type="entry name" value="Acyl-CoA_thioEstase_long-chain"/>
</dbReference>
<dbReference type="InterPro" id="IPR014940">
    <property type="entry name" value="BAAT_C"/>
</dbReference>
<dbReference type="InterPro" id="IPR006862">
    <property type="entry name" value="Thio_Ohase/aa_AcTrfase"/>
</dbReference>
<dbReference type="InterPro" id="IPR042490">
    <property type="entry name" value="Thio_Ohase/BAAT_N"/>
</dbReference>
<dbReference type="PANTHER" id="PTHR10824">
    <property type="entry name" value="ACYL-COENZYME A THIOESTERASE-RELATED"/>
    <property type="match status" value="1"/>
</dbReference>
<dbReference type="PANTHER" id="PTHR10824:SF6">
    <property type="entry name" value="PEROXISOMAL SUCCINYL-COENZYME A THIOESTERASE"/>
    <property type="match status" value="1"/>
</dbReference>
<dbReference type="Pfam" id="PF08840">
    <property type="entry name" value="BAAT_C"/>
    <property type="match status" value="1"/>
</dbReference>
<dbReference type="Pfam" id="PF04775">
    <property type="entry name" value="Bile_Hydr_Trans"/>
    <property type="match status" value="1"/>
</dbReference>
<dbReference type="PIRSF" id="PIRSF016521">
    <property type="entry name" value="Acyl-CoA_hydro"/>
    <property type="match status" value="1"/>
</dbReference>
<dbReference type="SUPFAM" id="SSF53474">
    <property type="entry name" value="alpha/beta-Hydrolases"/>
    <property type="match status" value="1"/>
</dbReference>
<proteinExistence type="evidence at protein level"/>